<organism>
    <name type="scientific">Pinus strobus</name>
    <name type="common">Eastern white pine</name>
    <dbReference type="NCBI Taxonomy" id="3348"/>
    <lineage>
        <taxon>Eukaryota</taxon>
        <taxon>Viridiplantae</taxon>
        <taxon>Streptophyta</taxon>
        <taxon>Embryophyta</taxon>
        <taxon>Tracheophyta</taxon>
        <taxon>Spermatophyta</taxon>
        <taxon>Pinopsida</taxon>
        <taxon>Pinidae</taxon>
        <taxon>Conifers I</taxon>
        <taxon>Pinales</taxon>
        <taxon>Pinaceae</taxon>
        <taxon>Pinus</taxon>
        <taxon>Pinus subgen. Strobus</taxon>
    </lineage>
</organism>
<evidence type="ECO:0000269" key="1">
    <source>
    </source>
</evidence>
<evidence type="ECO:0000303" key="2">
    <source>
    </source>
</evidence>
<evidence type="ECO:0000305" key="3"/>
<protein>
    <recommendedName>
        <fullName>Putative leucine-rich repeat protein PS14</fullName>
        <shortName>LRR</shortName>
    </recommendedName>
</protein>
<name>PS14_PINST</name>
<comment type="miscellaneous">
    <text evidence="1">On the 2D-gel the determined pI of this protein is: 5.7, its MW is: 22.8 kDa.</text>
</comment>
<comment type="caution">
    <text evidence="3">The order of the peptides shown is unknown.</text>
</comment>
<keyword id="KW-0903">Direct protein sequencing</keyword>
<reference evidence="3" key="1">
    <citation type="journal article" date="2006" name="Mol. Plant Microbe Interact.">
        <title>Proteomic comparison of needles from blister rust-resistant and susceptible Pinus strobus seedlings reveals upregulation of putative disease resistance proteins.</title>
        <authorList>
            <person name="Smith J.A."/>
            <person name="Blanchette R.A."/>
            <person name="Burnes T.A."/>
            <person name="Jacobs J.J."/>
            <person name="Higgins L."/>
            <person name="Witthuhn B.A."/>
            <person name="David A.J."/>
            <person name="Gillman J.H."/>
        </authorList>
    </citation>
    <scope>PROTEIN SEQUENCE</scope>
    <source>
        <tissue evidence="1">Leaf</tissue>
    </source>
</reference>
<proteinExistence type="evidence at protein level"/>
<sequence length="32" mass="3371">CSDGLKGLNALGTLPRKGLNALGTLPWVDLYN</sequence>
<feature type="chain" id="PRO_0000240618" description="Putative leucine-rich repeat protein PS14">
    <location>
        <begin position="1" status="less than"/>
        <end position="32" status="greater than"/>
    </location>
</feature>
<feature type="non-consecutive residues" evidence="2">
    <location>
        <begin position="16"/>
        <end position="17"/>
    </location>
</feature>
<feature type="non-consecutive residues" evidence="2">
    <location>
        <begin position="26"/>
        <end position="27"/>
    </location>
</feature>
<feature type="non-terminal residue" evidence="2">
    <location>
        <position position="1"/>
    </location>
</feature>
<feature type="non-terminal residue" evidence="2">
    <location>
        <position position="32"/>
    </location>
</feature>
<accession>P84730</accession>